<reference key="1">
    <citation type="journal article" date="2004" name="Science">
        <title>A predator unmasked: life cycle of Bdellovibrio bacteriovorus from a genomic perspective.</title>
        <authorList>
            <person name="Rendulic S."/>
            <person name="Jagtap P."/>
            <person name="Rosinus A."/>
            <person name="Eppinger M."/>
            <person name="Baar C."/>
            <person name="Lanz C."/>
            <person name="Keller H."/>
            <person name="Lambert C."/>
            <person name="Evans K.J."/>
            <person name="Goesmann A."/>
            <person name="Meyer F."/>
            <person name="Sockett R.E."/>
            <person name="Schuster S.C."/>
        </authorList>
    </citation>
    <scope>NUCLEOTIDE SEQUENCE [LARGE SCALE GENOMIC DNA]</scope>
    <source>
        <strain>ATCC 15356 / DSM 50701 / NCIMB 9529 / HD100</strain>
    </source>
</reference>
<dbReference type="EMBL" id="BX842656">
    <property type="protein sequence ID" value="CAE81263.1"/>
    <property type="molecule type" value="Genomic_DNA"/>
</dbReference>
<dbReference type="RefSeq" id="WP_011166206.1">
    <property type="nucleotide sequence ID" value="NC_005363.1"/>
</dbReference>
<dbReference type="SMR" id="Q6MGL6"/>
<dbReference type="STRING" id="264462.Bd3909"/>
<dbReference type="GeneID" id="93014674"/>
<dbReference type="KEGG" id="bba:Bd3909"/>
<dbReference type="eggNOG" id="COG0445">
    <property type="taxonomic scope" value="Bacteria"/>
</dbReference>
<dbReference type="HOGENOM" id="CLU_007831_2_2_7"/>
<dbReference type="Proteomes" id="UP000008080">
    <property type="component" value="Chromosome"/>
</dbReference>
<dbReference type="GO" id="GO:0005829">
    <property type="term" value="C:cytosol"/>
    <property type="evidence" value="ECO:0007669"/>
    <property type="project" value="TreeGrafter"/>
</dbReference>
<dbReference type="GO" id="GO:0050660">
    <property type="term" value="F:flavin adenine dinucleotide binding"/>
    <property type="evidence" value="ECO:0007669"/>
    <property type="project" value="UniProtKB-UniRule"/>
</dbReference>
<dbReference type="GO" id="GO:0030488">
    <property type="term" value="P:tRNA methylation"/>
    <property type="evidence" value="ECO:0007669"/>
    <property type="project" value="TreeGrafter"/>
</dbReference>
<dbReference type="GO" id="GO:0002098">
    <property type="term" value="P:tRNA wobble uridine modification"/>
    <property type="evidence" value="ECO:0007669"/>
    <property type="project" value="InterPro"/>
</dbReference>
<dbReference type="FunFam" id="1.10.150.570:FF:000001">
    <property type="entry name" value="tRNA uridine 5-carboxymethylaminomethyl modification enzyme MnmG"/>
    <property type="match status" value="1"/>
</dbReference>
<dbReference type="FunFam" id="3.50.50.60:FF:000002">
    <property type="entry name" value="tRNA uridine 5-carboxymethylaminomethyl modification enzyme MnmG"/>
    <property type="match status" value="1"/>
</dbReference>
<dbReference type="Gene3D" id="3.50.50.60">
    <property type="entry name" value="FAD/NAD(P)-binding domain"/>
    <property type="match status" value="2"/>
</dbReference>
<dbReference type="Gene3D" id="1.10.150.570">
    <property type="entry name" value="GidA associated domain, C-terminal subdomain"/>
    <property type="match status" value="1"/>
</dbReference>
<dbReference type="Gene3D" id="1.10.10.1800">
    <property type="entry name" value="tRNA uridine 5-carboxymethylaminomethyl modification enzyme MnmG/GidA"/>
    <property type="match status" value="1"/>
</dbReference>
<dbReference type="HAMAP" id="MF_00129">
    <property type="entry name" value="MnmG_GidA"/>
    <property type="match status" value="1"/>
</dbReference>
<dbReference type="InterPro" id="IPR036188">
    <property type="entry name" value="FAD/NAD-bd_sf"/>
</dbReference>
<dbReference type="InterPro" id="IPR049312">
    <property type="entry name" value="GIDA_C_N"/>
</dbReference>
<dbReference type="InterPro" id="IPR004416">
    <property type="entry name" value="MnmG"/>
</dbReference>
<dbReference type="InterPro" id="IPR002218">
    <property type="entry name" value="MnmG-rel"/>
</dbReference>
<dbReference type="InterPro" id="IPR020595">
    <property type="entry name" value="MnmG-rel_CS"/>
</dbReference>
<dbReference type="InterPro" id="IPR026904">
    <property type="entry name" value="MnmG_C"/>
</dbReference>
<dbReference type="InterPro" id="IPR047001">
    <property type="entry name" value="MnmG_C_subdom"/>
</dbReference>
<dbReference type="InterPro" id="IPR044920">
    <property type="entry name" value="MnmG_C_subdom_sf"/>
</dbReference>
<dbReference type="InterPro" id="IPR040131">
    <property type="entry name" value="MnmG_N"/>
</dbReference>
<dbReference type="NCBIfam" id="TIGR00136">
    <property type="entry name" value="mnmG_gidA"/>
    <property type="match status" value="1"/>
</dbReference>
<dbReference type="PANTHER" id="PTHR11806">
    <property type="entry name" value="GLUCOSE INHIBITED DIVISION PROTEIN A"/>
    <property type="match status" value="1"/>
</dbReference>
<dbReference type="PANTHER" id="PTHR11806:SF0">
    <property type="entry name" value="PROTEIN MTO1 HOMOLOG, MITOCHONDRIAL"/>
    <property type="match status" value="1"/>
</dbReference>
<dbReference type="Pfam" id="PF01134">
    <property type="entry name" value="GIDA"/>
    <property type="match status" value="1"/>
</dbReference>
<dbReference type="Pfam" id="PF21680">
    <property type="entry name" value="GIDA_C_1st"/>
    <property type="match status" value="1"/>
</dbReference>
<dbReference type="Pfam" id="PF13932">
    <property type="entry name" value="SAM_GIDA_C"/>
    <property type="match status" value="1"/>
</dbReference>
<dbReference type="SMART" id="SM01228">
    <property type="entry name" value="GIDA_assoc_3"/>
    <property type="match status" value="1"/>
</dbReference>
<dbReference type="SUPFAM" id="SSF51905">
    <property type="entry name" value="FAD/NAD(P)-binding domain"/>
    <property type="match status" value="1"/>
</dbReference>
<dbReference type="PROSITE" id="PS01280">
    <property type="entry name" value="GIDA_1"/>
    <property type="match status" value="1"/>
</dbReference>
<dbReference type="PROSITE" id="PS01281">
    <property type="entry name" value="GIDA_2"/>
    <property type="match status" value="1"/>
</dbReference>
<evidence type="ECO:0000255" key="1">
    <source>
        <dbReference type="HAMAP-Rule" id="MF_00129"/>
    </source>
</evidence>
<gene>
    <name evidence="1" type="primary">mnmG</name>
    <name evidence="1" type="synonym">gidA</name>
    <name type="ordered locus">Bd3909</name>
</gene>
<keyword id="KW-0963">Cytoplasm</keyword>
<keyword id="KW-0274">FAD</keyword>
<keyword id="KW-0285">Flavoprotein</keyword>
<keyword id="KW-0520">NAD</keyword>
<keyword id="KW-1185">Reference proteome</keyword>
<keyword id="KW-0819">tRNA processing</keyword>
<sequence>MANKKYDVIVVGAGHAGIEACLSSARLGLNTLMVTTNTDRIGYMSCNPSIGGLAKGHMVREIDVLGGQMGVAADETCIQYKRLNASKGPAVRGTRVQNDKHLYSQFQKEALYNQPNLEVLQGEVKRLILEKDLCVGVVLQDGSEIFGKATIITTGTFMNGVMHIGLRQEAGGRVGDQPSIGLSDQLAQFGFEVKRLKTGTPARLLKDSIDWSKTIPQAGDEKVYPFSFRSSDKLKLPQVLCYLTRTTEETHDIIRGNLDKSPMYCGIIEGVGPRYCPSIEDKITRFAERTSHQTFLEPEGLSTDLIYLQGISTSLPEDVQDRFLKTIPGLENVKVARYGYAVEYDYIEPTQIWHRLETRTIRQLFLAGQINGTSGYEEAAAQGLIAGINAAHSILGREEFILGRDQAYMGVMIDDLVTKGTREPYRMFTSRAEHRLVLREDNTIDRLSDLGRKLGLVSAESFELLTNLRERRQVLHDRLKNTVLYPTKDIQAILATIPTPAMSKSLTFEELLRRPELTSSHLELLNFELDPDPNVVEPVEIEVKYSGYVKRQMDLIVQSKRLEEMLLPDDLAYAEIRGLSNEEKDKLLRVKPRTLGQAQRISGVNPSAIQAIMIHLKGHKKIKEMGLEGQSGAGSTDSILAH</sequence>
<comment type="function">
    <text evidence="1">NAD-binding protein involved in the addition of a carboxymethylaminomethyl (cmnm) group at the wobble position (U34) of certain tRNAs, forming tRNA-cmnm(5)s(2)U34.</text>
</comment>
<comment type="cofactor">
    <cofactor evidence="1">
        <name>FAD</name>
        <dbReference type="ChEBI" id="CHEBI:57692"/>
    </cofactor>
</comment>
<comment type="subunit">
    <text evidence="1">Homodimer. Heterotetramer of two MnmE and two MnmG subunits.</text>
</comment>
<comment type="subcellular location">
    <subcellularLocation>
        <location evidence="1">Cytoplasm</location>
    </subcellularLocation>
</comment>
<comment type="similarity">
    <text evidence="1">Belongs to the MnmG family.</text>
</comment>
<accession>Q6MGL6</accession>
<feature type="chain" id="PRO_0000117061" description="tRNA uridine 5-carboxymethylaminomethyl modification enzyme MnmG">
    <location>
        <begin position="1"/>
        <end position="642"/>
    </location>
</feature>
<feature type="binding site" evidence="1">
    <location>
        <begin position="12"/>
        <end position="17"/>
    </location>
    <ligand>
        <name>FAD</name>
        <dbReference type="ChEBI" id="CHEBI:57692"/>
    </ligand>
</feature>
<feature type="binding site" evidence="1">
    <location>
        <position position="124"/>
    </location>
    <ligand>
        <name>FAD</name>
        <dbReference type="ChEBI" id="CHEBI:57692"/>
    </ligand>
</feature>
<feature type="binding site" evidence="1">
    <location>
        <position position="179"/>
    </location>
    <ligand>
        <name>FAD</name>
        <dbReference type="ChEBI" id="CHEBI:57692"/>
    </ligand>
</feature>
<feature type="binding site" evidence="1">
    <location>
        <begin position="272"/>
        <end position="286"/>
    </location>
    <ligand>
        <name>NAD(+)</name>
        <dbReference type="ChEBI" id="CHEBI:57540"/>
    </ligand>
</feature>
<feature type="binding site" evidence="1">
    <location>
        <position position="369"/>
    </location>
    <ligand>
        <name>FAD</name>
        <dbReference type="ChEBI" id="CHEBI:57692"/>
    </ligand>
</feature>
<organism>
    <name type="scientific">Bdellovibrio bacteriovorus (strain ATCC 15356 / DSM 50701 / NCIMB 9529 / HD100)</name>
    <dbReference type="NCBI Taxonomy" id="264462"/>
    <lineage>
        <taxon>Bacteria</taxon>
        <taxon>Pseudomonadati</taxon>
        <taxon>Bdellovibrionota</taxon>
        <taxon>Bdellovibrionia</taxon>
        <taxon>Bdellovibrionales</taxon>
        <taxon>Pseudobdellovibrionaceae</taxon>
        <taxon>Bdellovibrio</taxon>
    </lineage>
</organism>
<name>MNMG_BDEBA</name>
<protein>
    <recommendedName>
        <fullName evidence="1">tRNA uridine 5-carboxymethylaminomethyl modification enzyme MnmG</fullName>
    </recommendedName>
    <alternativeName>
        <fullName evidence="1">Glucose-inhibited division protein A</fullName>
    </alternativeName>
</protein>
<proteinExistence type="inferred from homology"/>